<reference key="1">
    <citation type="journal article" date="2007" name="Nat. Biotechnol.">
        <title>Comparative analysis of the complete genome sequence of the plant growth-promoting bacterium Bacillus amyloliquefaciens FZB42.</title>
        <authorList>
            <person name="Chen X.H."/>
            <person name="Koumoutsi A."/>
            <person name="Scholz R."/>
            <person name="Eisenreich A."/>
            <person name="Schneider K."/>
            <person name="Heinemeyer I."/>
            <person name="Morgenstern B."/>
            <person name="Voss B."/>
            <person name="Hess W.R."/>
            <person name="Reva O."/>
            <person name="Junge H."/>
            <person name="Voigt B."/>
            <person name="Jungblut P.R."/>
            <person name="Vater J."/>
            <person name="Suessmuth R."/>
            <person name="Liesegang H."/>
            <person name="Strittmatter A."/>
            <person name="Gottschalk G."/>
            <person name="Borriss R."/>
        </authorList>
    </citation>
    <scope>NUCLEOTIDE SEQUENCE [LARGE SCALE GENOMIC DNA]</scope>
    <source>
        <strain>DSM 23117 / BGSC 10A6 / LMG 26770 / FZB42</strain>
    </source>
</reference>
<gene>
    <name evidence="1" type="primary">pth</name>
    <name type="ordered locus">RBAM_000620</name>
</gene>
<name>PTH_BACVZ</name>
<protein>
    <recommendedName>
        <fullName evidence="1">Peptidyl-tRNA hydrolase</fullName>
        <shortName evidence="1">Pth</shortName>
        <ecNumber evidence="1">3.1.1.29</ecNumber>
    </recommendedName>
</protein>
<feature type="chain" id="PRO_1000010562" description="Peptidyl-tRNA hydrolase">
    <location>
        <begin position="1"/>
        <end position="188"/>
    </location>
</feature>
<feature type="active site" description="Proton acceptor" evidence="1">
    <location>
        <position position="19"/>
    </location>
</feature>
<feature type="binding site" evidence="1">
    <location>
        <position position="14"/>
    </location>
    <ligand>
        <name>tRNA</name>
        <dbReference type="ChEBI" id="CHEBI:17843"/>
    </ligand>
</feature>
<feature type="binding site" evidence="1">
    <location>
        <position position="64"/>
    </location>
    <ligand>
        <name>tRNA</name>
        <dbReference type="ChEBI" id="CHEBI:17843"/>
    </ligand>
</feature>
<feature type="binding site" evidence="1">
    <location>
        <position position="66"/>
    </location>
    <ligand>
        <name>tRNA</name>
        <dbReference type="ChEBI" id="CHEBI:17843"/>
    </ligand>
</feature>
<feature type="binding site" evidence="1">
    <location>
        <position position="112"/>
    </location>
    <ligand>
        <name>tRNA</name>
        <dbReference type="ChEBI" id="CHEBI:17843"/>
    </ligand>
</feature>
<feature type="site" description="Discriminates between blocked and unblocked aminoacyl-tRNA" evidence="1">
    <location>
        <position position="9"/>
    </location>
</feature>
<feature type="site" description="Stabilizes the basic form of H active site to accept a proton" evidence="1">
    <location>
        <position position="91"/>
    </location>
</feature>
<evidence type="ECO:0000255" key="1">
    <source>
        <dbReference type="HAMAP-Rule" id="MF_00083"/>
    </source>
</evidence>
<sequence length="188" mass="20814">MLVIAGLGNPGKTYENTRHNVGFMAIDELSKEWNIELNKTKFNGLYGMGFVSGKKVLLVKPLTYMNLSGECLRPILDYYDADHEDLKVIYDDLDLPTGKIRLRTKGSAGGHNGIKSLIQHLGTPEFDRVRIGIGRPVNGMKVVDYVLGAFTKEEAPHINDAVSKTVKACEASLTKPFLEVMNEFNANV</sequence>
<comment type="function">
    <text evidence="1">Hydrolyzes ribosome-free peptidyl-tRNAs (with 1 or more amino acids incorporated), which drop off the ribosome during protein synthesis, or as a result of ribosome stalling.</text>
</comment>
<comment type="function">
    <text evidence="1">Catalyzes the release of premature peptidyl moieties from peptidyl-tRNA molecules trapped in stalled 50S ribosomal subunits, and thus maintains levels of free tRNAs and 50S ribosomes.</text>
</comment>
<comment type="catalytic activity">
    <reaction evidence="1">
        <text>an N-acyl-L-alpha-aminoacyl-tRNA + H2O = an N-acyl-L-amino acid + a tRNA + H(+)</text>
        <dbReference type="Rhea" id="RHEA:54448"/>
        <dbReference type="Rhea" id="RHEA-COMP:10123"/>
        <dbReference type="Rhea" id="RHEA-COMP:13883"/>
        <dbReference type="ChEBI" id="CHEBI:15377"/>
        <dbReference type="ChEBI" id="CHEBI:15378"/>
        <dbReference type="ChEBI" id="CHEBI:59874"/>
        <dbReference type="ChEBI" id="CHEBI:78442"/>
        <dbReference type="ChEBI" id="CHEBI:138191"/>
        <dbReference type="EC" id="3.1.1.29"/>
    </reaction>
</comment>
<comment type="subunit">
    <text evidence="1">Monomer.</text>
</comment>
<comment type="subcellular location">
    <subcellularLocation>
        <location evidence="1">Cytoplasm</location>
    </subcellularLocation>
</comment>
<comment type="similarity">
    <text evidence="1">Belongs to the PTH family.</text>
</comment>
<proteinExistence type="inferred from homology"/>
<organism>
    <name type="scientific">Bacillus velezensis (strain DSM 23117 / BGSC 10A6 / LMG 26770 / FZB42)</name>
    <name type="common">Bacillus amyloliquefaciens subsp. plantarum</name>
    <dbReference type="NCBI Taxonomy" id="326423"/>
    <lineage>
        <taxon>Bacteria</taxon>
        <taxon>Bacillati</taxon>
        <taxon>Bacillota</taxon>
        <taxon>Bacilli</taxon>
        <taxon>Bacillales</taxon>
        <taxon>Bacillaceae</taxon>
        <taxon>Bacillus</taxon>
        <taxon>Bacillus amyloliquefaciens group</taxon>
    </lineage>
</organism>
<accession>A7Z0H6</accession>
<keyword id="KW-0963">Cytoplasm</keyword>
<keyword id="KW-0378">Hydrolase</keyword>
<keyword id="KW-0694">RNA-binding</keyword>
<keyword id="KW-0820">tRNA-binding</keyword>
<dbReference type="EC" id="3.1.1.29" evidence="1"/>
<dbReference type="EMBL" id="CP000560">
    <property type="protein sequence ID" value="ABS72502.1"/>
    <property type="molecule type" value="Genomic_DNA"/>
</dbReference>
<dbReference type="RefSeq" id="WP_011996174.1">
    <property type="nucleotide sequence ID" value="NC_009725.2"/>
</dbReference>
<dbReference type="SMR" id="A7Z0H6"/>
<dbReference type="GeneID" id="93079200"/>
<dbReference type="KEGG" id="bay:RBAM_000620"/>
<dbReference type="HOGENOM" id="CLU_062456_4_1_9"/>
<dbReference type="Proteomes" id="UP000001120">
    <property type="component" value="Chromosome"/>
</dbReference>
<dbReference type="GO" id="GO:0005737">
    <property type="term" value="C:cytoplasm"/>
    <property type="evidence" value="ECO:0007669"/>
    <property type="project" value="UniProtKB-SubCell"/>
</dbReference>
<dbReference type="GO" id="GO:0004045">
    <property type="term" value="F:peptidyl-tRNA hydrolase activity"/>
    <property type="evidence" value="ECO:0007669"/>
    <property type="project" value="UniProtKB-UniRule"/>
</dbReference>
<dbReference type="GO" id="GO:0000049">
    <property type="term" value="F:tRNA binding"/>
    <property type="evidence" value="ECO:0007669"/>
    <property type="project" value="UniProtKB-UniRule"/>
</dbReference>
<dbReference type="GO" id="GO:0006515">
    <property type="term" value="P:protein quality control for misfolded or incompletely synthesized proteins"/>
    <property type="evidence" value="ECO:0007669"/>
    <property type="project" value="UniProtKB-UniRule"/>
</dbReference>
<dbReference type="GO" id="GO:0072344">
    <property type="term" value="P:rescue of stalled ribosome"/>
    <property type="evidence" value="ECO:0007669"/>
    <property type="project" value="UniProtKB-UniRule"/>
</dbReference>
<dbReference type="CDD" id="cd00462">
    <property type="entry name" value="PTH"/>
    <property type="match status" value="1"/>
</dbReference>
<dbReference type="FunFam" id="3.40.50.1470:FF:000001">
    <property type="entry name" value="Peptidyl-tRNA hydrolase"/>
    <property type="match status" value="1"/>
</dbReference>
<dbReference type="Gene3D" id="3.40.50.1470">
    <property type="entry name" value="Peptidyl-tRNA hydrolase"/>
    <property type="match status" value="1"/>
</dbReference>
<dbReference type="HAMAP" id="MF_00083">
    <property type="entry name" value="Pept_tRNA_hydro_bact"/>
    <property type="match status" value="1"/>
</dbReference>
<dbReference type="InterPro" id="IPR001328">
    <property type="entry name" value="Pept_tRNA_hydro"/>
</dbReference>
<dbReference type="InterPro" id="IPR018171">
    <property type="entry name" value="Pept_tRNA_hydro_CS"/>
</dbReference>
<dbReference type="InterPro" id="IPR036416">
    <property type="entry name" value="Pept_tRNA_hydro_sf"/>
</dbReference>
<dbReference type="NCBIfam" id="TIGR00447">
    <property type="entry name" value="pth"/>
    <property type="match status" value="1"/>
</dbReference>
<dbReference type="PANTHER" id="PTHR17224">
    <property type="entry name" value="PEPTIDYL-TRNA HYDROLASE"/>
    <property type="match status" value="1"/>
</dbReference>
<dbReference type="PANTHER" id="PTHR17224:SF1">
    <property type="entry name" value="PEPTIDYL-TRNA HYDROLASE"/>
    <property type="match status" value="1"/>
</dbReference>
<dbReference type="Pfam" id="PF01195">
    <property type="entry name" value="Pept_tRNA_hydro"/>
    <property type="match status" value="1"/>
</dbReference>
<dbReference type="SUPFAM" id="SSF53178">
    <property type="entry name" value="Peptidyl-tRNA hydrolase-like"/>
    <property type="match status" value="1"/>
</dbReference>
<dbReference type="PROSITE" id="PS01195">
    <property type="entry name" value="PEPT_TRNA_HYDROL_1"/>
    <property type="match status" value="1"/>
</dbReference>
<dbReference type="PROSITE" id="PS01196">
    <property type="entry name" value="PEPT_TRNA_HYDROL_2"/>
    <property type="match status" value="1"/>
</dbReference>